<gene>
    <name evidence="1" type="primary">coaA</name>
    <name type="ordered locus">SSPA3697</name>
</gene>
<sequence>MSIKEQSLMTPYLQFDRSQWAALRDSVPMTLTEDEIAQLKGINEDLSLEEVAEIYLPLSRLLNFYISSNLRRQAVLEQFLGTNGQRIPYIISIAGSVAVGKSTTARVLQALLSRWPEHRRVELITTDGFLHPNQVLKERGLMKKKGFPESYDMHRLVKFVSDLKSGVPNVTAPVYSHLIYDVIPEGDKTVAQPDILILEGLNVLQSGMDYPHDPHHVFVSDFVDFSIYVDAPEELLQTWYINRFLKFREGAFTDPDSYFHNYAKLSKEEAVNTAASLWKEINWLNLKQNILPTRERASLIMTKSANHAVEQVRLRK</sequence>
<name>COAA_SALPK</name>
<evidence type="ECO:0000255" key="1">
    <source>
        <dbReference type="HAMAP-Rule" id="MF_00215"/>
    </source>
</evidence>
<accession>B5BJP4</accession>
<protein>
    <recommendedName>
        <fullName evidence="1">Pantothenate kinase</fullName>
        <ecNumber evidence="1">2.7.1.33</ecNumber>
    </recommendedName>
    <alternativeName>
        <fullName evidence="1">Pantothenic acid kinase</fullName>
    </alternativeName>
</protein>
<organism>
    <name type="scientific">Salmonella paratyphi A (strain AKU_12601)</name>
    <dbReference type="NCBI Taxonomy" id="554290"/>
    <lineage>
        <taxon>Bacteria</taxon>
        <taxon>Pseudomonadati</taxon>
        <taxon>Pseudomonadota</taxon>
        <taxon>Gammaproteobacteria</taxon>
        <taxon>Enterobacterales</taxon>
        <taxon>Enterobacteriaceae</taxon>
        <taxon>Salmonella</taxon>
    </lineage>
</organism>
<keyword id="KW-0067">ATP-binding</keyword>
<keyword id="KW-0173">Coenzyme A biosynthesis</keyword>
<keyword id="KW-0963">Cytoplasm</keyword>
<keyword id="KW-0418">Kinase</keyword>
<keyword id="KW-0547">Nucleotide-binding</keyword>
<keyword id="KW-0808">Transferase</keyword>
<feature type="chain" id="PRO_1000099949" description="Pantothenate kinase">
    <location>
        <begin position="1"/>
        <end position="316"/>
    </location>
</feature>
<feature type="binding site" evidence="1">
    <location>
        <begin position="95"/>
        <end position="102"/>
    </location>
    <ligand>
        <name>ATP</name>
        <dbReference type="ChEBI" id="CHEBI:30616"/>
    </ligand>
</feature>
<reference key="1">
    <citation type="journal article" date="2009" name="BMC Genomics">
        <title>Pseudogene accumulation in the evolutionary histories of Salmonella enterica serovars Paratyphi A and Typhi.</title>
        <authorList>
            <person name="Holt K.E."/>
            <person name="Thomson N.R."/>
            <person name="Wain J."/>
            <person name="Langridge G.C."/>
            <person name="Hasan R."/>
            <person name="Bhutta Z.A."/>
            <person name="Quail M.A."/>
            <person name="Norbertczak H."/>
            <person name="Walker D."/>
            <person name="Simmonds M."/>
            <person name="White B."/>
            <person name="Bason N."/>
            <person name="Mungall K."/>
            <person name="Dougan G."/>
            <person name="Parkhill J."/>
        </authorList>
    </citation>
    <scope>NUCLEOTIDE SEQUENCE [LARGE SCALE GENOMIC DNA]</scope>
    <source>
        <strain>AKU_12601</strain>
    </source>
</reference>
<comment type="catalytic activity">
    <reaction evidence="1">
        <text>(R)-pantothenate + ATP = (R)-4'-phosphopantothenate + ADP + H(+)</text>
        <dbReference type="Rhea" id="RHEA:16373"/>
        <dbReference type="ChEBI" id="CHEBI:10986"/>
        <dbReference type="ChEBI" id="CHEBI:15378"/>
        <dbReference type="ChEBI" id="CHEBI:29032"/>
        <dbReference type="ChEBI" id="CHEBI:30616"/>
        <dbReference type="ChEBI" id="CHEBI:456216"/>
        <dbReference type="EC" id="2.7.1.33"/>
    </reaction>
</comment>
<comment type="pathway">
    <text evidence="1">Cofactor biosynthesis; coenzyme A biosynthesis; CoA from (R)-pantothenate: step 1/5.</text>
</comment>
<comment type="subcellular location">
    <subcellularLocation>
        <location evidence="1">Cytoplasm</location>
    </subcellularLocation>
</comment>
<comment type="similarity">
    <text evidence="1">Belongs to the prokaryotic pantothenate kinase family.</text>
</comment>
<proteinExistence type="inferred from homology"/>
<dbReference type="EC" id="2.7.1.33" evidence="1"/>
<dbReference type="EMBL" id="FM200053">
    <property type="protein sequence ID" value="CAR61980.1"/>
    <property type="molecule type" value="Genomic_DNA"/>
</dbReference>
<dbReference type="RefSeq" id="WP_000023068.1">
    <property type="nucleotide sequence ID" value="NC_011147.1"/>
</dbReference>
<dbReference type="SMR" id="B5BJP4"/>
<dbReference type="KEGG" id="sek:SSPA3697"/>
<dbReference type="HOGENOM" id="CLU_053818_1_1_6"/>
<dbReference type="UniPathway" id="UPA00241">
    <property type="reaction ID" value="UER00352"/>
</dbReference>
<dbReference type="Proteomes" id="UP000001869">
    <property type="component" value="Chromosome"/>
</dbReference>
<dbReference type="GO" id="GO:0005737">
    <property type="term" value="C:cytoplasm"/>
    <property type="evidence" value="ECO:0007669"/>
    <property type="project" value="UniProtKB-SubCell"/>
</dbReference>
<dbReference type="GO" id="GO:0005524">
    <property type="term" value="F:ATP binding"/>
    <property type="evidence" value="ECO:0007669"/>
    <property type="project" value="UniProtKB-UniRule"/>
</dbReference>
<dbReference type="GO" id="GO:0004594">
    <property type="term" value="F:pantothenate kinase activity"/>
    <property type="evidence" value="ECO:0007669"/>
    <property type="project" value="UniProtKB-UniRule"/>
</dbReference>
<dbReference type="GO" id="GO:0015937">
    <property type="term" value="P:coenzyme A biosynthetic process"/>
    <property type="evidence" value="ECO:0007669"/>
    <property type="project" value="UniProtKB-UniRule"/>
</dbReference>
<dbReference type="CDD" id="cd02025">
    <property type="entry name" value="PanK"/>
    <property type="match status" value="1"/>
</dbReference>
<dbReference type="FunFam" id="3.40.50.300:FF:000242">
    <property type="entry name" value="Pantothenate kinase"/>
    <property type="match status" value="1"/>
</dbReference>
<dbReference type="Gene3D" id="3.40.50.300">
    <property type="entry name" value="P-loop containing nucleotide triphosphate hydrolases"/>
    <property type="match status" value="1"/>
</dbReference>
<dbReference type="HAMAP" id="MF_00215">
    <property type="entry name" value="Pantothen_kinase_1"/>
    <property type="match status" value="1"/>
</dbReference>
<dbReference type="InterPro" id="IPR027417">
    <property type="entry name" value="P-loop_NTPase"/>
</dbReference>
<dbReference type="InterPro" id="IPR004566">
    <property type="entry name" value="PanK"/>
</dbReference>
<dbReference type="InterPro" id="IPR006083">
    <property type="entry name" value="PRK/URK"/>
</dbReference>
<dbReference type="NCBIfam" id="TIGR00554">
    <property type="entry name" value="panK_bact"/>
    <property type="match status" value="1"/>
</dbReference>
<dbReference type="PANTHER" id="PTHR10285">
    <property type="entry name" value="URIDINE KINASE"/>
    <property type="match status" value="1"/>
</dbReference>
<dbReference type="Pfam" id="PF00485">
    <property type="entry name" value="PRK"/>
    <property type="match status" value="1"/>
</dbReference>
<dbReference type="PIRSF" id="PIRSF000545">
    <property type="entry name" value="Pantothenate_kin"/>
    <property type="match status" value="1"/>
</dbReference>
<dbReference type="SUPFAM" id="SSF52540">
    <property type="entry name" value="P-loop containing nucleoside triphosphate hydrolases"/>
    <property type="match status" value="1"/>
</dbReference>